<gene>
    <name evidence="1" type="primary">rplP</name>
    <name type="ordered locus">Rxyl_2148</name>
</gene>
<keyword id="KW-1185">Reference proteome</keyword>
<keyword id="KW-0687">Ribonucleoprotein</keyword>
<keyword id="KW-0689">Ribosomal protein</keyword>
<keyword id="KW-0694">RNA-binding</keyword>
<keyword id="KW-0699">rRNA-binding</keyword>
<keyword id="KW-0820">tRNA-binding</keyword>
<dbReference type="EMBL" id="CP000386">
    <property type="protein sequence ID" value="ABG05092.1"/>
    <property type="molecule type" value="Genomic_DNA"/>
</dbReference>
<dbReference type="RefSeq" id="WP_011565107.1">
    <property type="nucleotide sequence ID" value="NC_008148.1"/>
</dbReference>
<dbReference type="SMR" id="Q1AU36"/>
<dbReference type="STRING" id="266117.Rxyl_2148"/>
<dbReference type="KEGG" id="rxy:Rxyl_2148"/>
<dbReference type="eggNOG" id="COG0197">
    <property type="taxonomic scope" value="Bacteria"/>
</dbReference>
<dbReference type="HOGENOM" id="CLU_078858_2_1_11"/>
<dbReference type="OrthoDB" id="9802589at2"/>
<dbReference type="PhylomeDB" id="Q1AU36"/>
<dbReference type="Proteomes" id="UP000006637">
    <property type="component" value="Chromosome"/>
</dbReference>
<dbReference type="GO" id="GO:0022625">
    <property type="term" value="C:cytosolic large ribosomal subunit"/>
    <property type="evidence" value="ECO:0007669"/>
    <property type="project" value="TreeGrafter"/>
</dbReference>
<dbReference type="GO" id="GO:0019843">
    <property type="term" value="F:rRNA binding"/>
    <property type="evidence" value="ECO:0007669"/>
    <property type="project" value="UniProtKB-UniRule"/>
</dbReference>
<dbReference type="GO" id="GO:0003735">
    <property type="term" value="F:structural constituent of ribosome"/>
    <property type="evidence" value="ECO:0007669"/>
    <property type="project" value="InterPro"/>
</dbReference>
<dbReference type="GO" id="GO:0000049">
    <property type="term" value="F:tRNA binding"/>
    <property type="evidence" value="ECO:0007669"/>
    <property type="project" value="UniProtKB-KW"/>
</dbReference>
<dbReference type="GO" id="GO:0006412">
    <property type="term" value="P:translation"/>
    <property type="evidence" value="ECO:0007669"/>
    <property type="project" value="UniProtKB-UniRule"/>
</dbReference>
<dbReference type="CDD" id="cd01433">
    <property type="entry name" value="Ribosomal_L16_L10e"/>
    <property type="match status" value="1"/>
</dbReference>
<dbReference type="FunFam" id="3.90.1170.10:FF:000001">
    <property type="entry name" value="50S ribosomal protein L16"/>
    <property type="match status" value="1"/>
</dbReference>
<dbReference type="Gene3D" id="3.90.1170.10">
    <property type="entry name" value="Ribosomal protein L10e/L16"/>
    <property type="match status" value="1"/>
</dbReference>
<dbReference type="HAMAP" id="MF_01342">
    <property type="entry name" value="Ribosomal_uL16"/>
    <property type="match status" value="1"/>
</dbReference>
<dbReference type="InterPro" id="IPR047873">
    <property type="entry name" value="Ribosomal_uL16"/>
</dbReference>
<dbReference type="InterPro" id="IPR000114">
    <property type="entry name" value="Ribosomal_uL16_bact-type"/>
</dbReference>
<dbReference type="InterPro" id="IPR020798">
    <property type="entry name" value="Ribosomal_uL16_CS"/>
</dbReference>
<dbReference type="InterPro" id="IPR016180">
    <property type="entry name" value="Ribosomal_uL16_dom"/>
</dbReference>
<dbReference type="InterPro" id="IPR036920">
    <property type="entry name" value="Ribosomal_uL16_sf"/>
</dbReference>
<dbReference type="NCBIfam" id="TIGR01164">
    <property type="entry name" value="rplP_bact"/>
    <property type="match status" value="1"/>
</dbReference>
<dbReference type="PANTHER" id="PTHR12220">
    <property type="entry name" value="50S/60S RIBOSOMAL PROTEIN L16"/>
    <property type="match status" value="1"/>
</dbReference>
<dbReference type="PANTHER" id="PTHR12220:SF13">
    <property type="entry name" value="LARGE RIBOSOMAL SUBUNIT PROTEIN UL16M"/>
    <property type="match status" value="1"/>
</dbReference>
<dbReference type="Pfam" id="PF00252">
    <property type="entry name" value="Ribosomal_L16"/>
    <property type="match status" value="1"/>
</dbReference>
<dbReference type="PRINTS" id="PR00060">
    <property type="entry name" value="RIBOSOMALL16"/>
</dbReference>
<dbReference type="SUPFAM" id="SSF54686">
    <property type="entry name" value="Ribosomal protein L16p/L10e"/>
    <property type="match status" value="1"/>
</dbReference>
<dbReference type="PROSITE" id="PS00586">
    <property type="entry name" value="RIBOSOMAL_L16_1"/>
    <property type="match status" value="1"/>
</dbReference>
<accession>Q1AU36</accession>
<comment type="function">
    <text evidence="1">Binds 23S rRNA and is also seen to make contacts with the A and possibly P site tRNAs.</text>
</comment>
<comment type="subunit">
    <text evidence="1">Part of the 50S ribosomal subunit.</text>
</comment>
<comment type="similarity">
    <text evidence="1">Belongs to the universal ribosomal protein uL16 family.</text>
</comment>
<name>RL16_RUBXD</name>
<organism>
    <name type="scientific">Rubrobacter xylanophilus (strain DSM 9941 / JCM 11954 / NBRC 16129 / PRD-1)</name>
    <dbReference type="NCBI Taxonomy" id="266117"/>
    <lineage>
        <taxon>Bacteria</taxon>
        <taxon>Bacillati</taxon>
        <taxon>Actinomycetota</taxon>
        <taxon>Rubrobacteria</taxon>
        <taxon>Rubrobacterales</taxon>
        <taxon>Rubrobacteraceae</taxon>
        <taxon>Rubrobacter</taxon>
    </lineage>
</organism>
<proteinExistence type="inferred from homology"/>
<feature type="chain" id="PRO_0000251668" description="Large ribosomal subunit protein uL16">
    <location>
        <begin position="1"/>
        <end position="138"/>
    </location>
</feature>
<evidence type="ECO:0000255" key="1">
    <source>
        <dbReference type="HAMAP-Rule" id="MF_01342"/>
    </source>
</evidence>
<evidence type="ECO:0000305" key="2"/>
<sequence length="138" mass="15470">MLVPRKLKWRKPQRGRMKGRAKGGTEVQFGEYGLQALEPAWITNRQIEAARIAMTRKIRRGGKVWINIFPHKPVTKKPAETRMGSGKGSPEEYVAVVKPGRVMFEMSGVGEELAREAMRLAAQKLPIKTRFLVRGGGS</sequence>
<protein>
    <recommendedName>
        <fullName evidence="1">Large ribosomal subunit protein uL16</fullName>
    </recommendedName>
    <alternativeName>
        <fullName evidence="2">50S ribosomal protein L16</fullName>
    </alternativeName>
</protein>
<reference key="1">
    <citation type="submission" date="2006-06" db="EMBL/GenBank/DDBJ databases">
        <title>Complete sequence of Rubrobacter xylanophilus DSM 9941.</title>
        <authorList>
            <consortium name="US DOE Joint Genome Institute"/>
            <person name="Copeland A."/>
            <person name="Lucas S."/>
            <person name="Lapidus A."/>
            <person name="Barry K."/>
            <person name="Detter J.C."/>
            <person name="Glavina del Rio T."/>
            <person name="Hammon N."/>
            <person name="Israni S."/>
            <person name="Dalin E."/>
            <person name="Tice H."/>
            <person name="Pitluck S."/>
            <person name="Munk A.C."/>
            <person name="Brettin T."/>
            <person name="Bruce D."/>
            <person name="Han C."/>
            <person name="Tapia R."/>
            <person name="Gilna P."/>
            <person name="Schmutz J."/>
            <person name="Larimer F."/>
            <person name="Land M."/>
            <person name="Hauser L."/>
            <person name="Kyrpides N."/>
            <person name="Lykidis A."/>
            <person name="da Costa M.S."/>
            <person name="Rainey F.A."/>
            <person name="Empadinhas N."/>
            <person name="Jolivet E."/>
            <person name="Battista J.R."/>
            <person name="Richardson P."/>
        </authorList>
    </citation>
    <scope>NUCLEOTIDE SEQUENCE [LARGE SCALE GENOMIC DNA]</scope>
    <source>
        <strain>DSM 9941 / JCM 11954 / NBRC 16129 / PRD-1</strain>
    </source>
</reference>